<organism>
    <name type="scientific">Yersinia pestis</name>
    <dbReference type="NCBI Taxonomy" id="632"/>
    <lineage>
        <taxon>Bacteria</taxon>
        <taxon>Pseudomonadati</taxon>
        <taxon>Pseudomonadota</taxon>
        <taxon>Gammaproteobacteria</taxon>
        <taxon>Enterobacterales</taxon>
        <taxon>Yersiniaceae</taxon>
        <taxon>Yersinia</taxon>
    </lineage>
</organism>
<sequence length="95" mass="10687">MSDSLWHLYLLRTASGMLYTGITTDVARRLAQHQAGKGAKALRGKGELTLVFHCEAGDRSTALKLEYRVKQLSKQQKEKLVIDQPRLLTTLFLDS</sequence>
<dbReference type="EMBL" id="AL590842">
    <property type="protein sequence ID" value="CAL22063.1"/>
    <property type="molecule type" value="Genomic_DNA"/>
</dbReference>
<dbReference type="EMBL" id="AE009952">
    <property type="protein sequence ID" value="AAM84297.1"/>
    <property type="molecule type" value="Genomic_DNA"/>
</dbReference>
<dbReference type="EMBL" id="AE017042">
    <property type="protein sequence ID" value="AAS60878.1"/>
    <property type="molecule type" value="Genomic_DNA"/>
</dbReference>
<dbReference type="PIR" id="AD0422">
    <property type="entry name" value="AD0422"/>
</dbReference>
<dbReference type="RefSeq" id="WP_002209274.1">
    <property type="nucleotide sequence ID" value="NZ_WUCK01000014.1"/>
</dbReference>
<dbReference type="RefSeq" id="YP_002348364.1">
    <property type="nucleotide sequence ID" value="NC_003143.1"/>
</dbReference>
<dbReference type="SMR" id="Q8ZBE1"/>
<dbReference type="STRING" id="214092.YPO3475"/>
<dbReference type="PaxDb" id="214092-YPO3475"/>
<dbReference type="EnsemblBacteria" id="AAS60878">
    <property type="protein sequence ID" value="AAS60878"/>
    <property type="gene ID" value="YP_0608"/>
</dbReference>
<dbReference type="KEGG" id="ype:YPO3475"/>
<dbReference type="KEGG" id="ypk:y0709"/>
<dbReference type="KEGG" id="ypm:YP_0608"/>
<dbReference type="PATRIC" id="fig|214092.21.peg.3969"/>
<dbReference type="eggNOG" id="COG2827">
    <property type="taxonomic scope" value="Bacteria"/>
</dbReference>
<dbReference type="HOGENOM" id="CLU_135650_0_0_6"/>
<dbReference type="OMA" id="VYVEQWP"/>
<dbReference type="OrthoDB" id="9797095at2"/>
<dbReference type="Proteomes" id="UP000000815">
    <property type="component" value="Chromosome"/>
</dbReference>
<dbReference type="Proteomes" id="UP000001019">
    <property type="component" value="Chromosome"/>
</dbReference>
<dbReference type="Proteomes" id="UP000002490">
    <property type="component" value="Chromosome"/>
</dbReference>
<dbReference type="CDD" id="cd10456">
    <property type="entry name" value="GIY-YIG_UPF0213"/>
    <property type="match status" value="1"/>
</dbReference>
<dbReference type="Gene3D" id="3.40.1440.10">
    <property type="entry name" value="GIY-YIG endonuclease"/>
    <property type="match status" value="1"/>
</dbReference>
<dbReference type="HAMAP" id="MF_01029">
    <property type="entry name" value="UPF0213"/>
    <property type="match status" value="1"/>
</dbReference>
<dbReference type="InterPro" id="IPR000305">
    <property type="entry name" value="GIY-YIG_endonuc"/>
</dbReference>
<dbReference type="InterPro" id="IPR035901">
    <property type="entry name" value="GIY-YIG_endonuc_sf"/>
</dbReference>
<dbReference type="InterPro" id="IPR050190">
    <property type="entry name" value="UPF0213_domain"/>
</dbReference>
<dbReference type="InterPro" id="IPR022992">
    <property type="entry name" value="UPF0213_GIY-YIG_endonuc"/>
</dbReference>
<dbReference type="PANTHER" id="PTHR34477">
    <property type="entry name" value="UPF0213 PROTEIN YHBQ"/>
    <property type="match status" value="1"/>
</dbReference>
<dbReference type="PANTHER" id="PTHR34477:SF1">
    <property type="entry name" value="UPF0213 PROTEIN YHBQ"/>
    <property type="match status" value="1"/>
</dbReference>
<dbReference type="Pfam" id="PF01541">
    <property type="entry name" value="GIY-YIG"/>
    <property type="match status" value="1"/>
</dbReference>
<dbReference type="SUPFAM" id="SSF82771">
    <property type="entry name" value="GIY-YIG endonuclease"/>
    <property type="match status" value="1"/>
</dbReference>
<dbReference type="PROSITE" id="PS50164">
    <property type="entry name" value="GIY_YIG"/>
    <property type="match status" value="1"/>
</dbReference>
<comment type="similarity">
    <text evidence="1">Belongs to the UPF0213 family.</text>
</comment>
<evidence type="ECO:0000255" key="1">
    <source>
        <dbReference type="HAMAP-Rule" id="MF_01029"/>
    </source>
</evidence>
<feature type="chain" id="PRO_0000161402" description="UPF0213 protein YPO3475/y0709/YP_0608">
    <location>
        <begin position="1"/>
        <end position="95"/>
    </location>
</feature>
<feature type="domain" description="GIY-YIG" evidence="1">
    <location>
        <begin position="4"/>
        <end position="79"/>
    </location>
</feature>
<name>Y3475_YERPE</name>
<gene>
    <name type="ordered locus">YPO3475</name>
    <name type="ordered locus">y0709</name>
    <name type="ordered locus">YP_0608</name>
</gene>
<reference key="1">
    <citation type="journal article" date="2001" name="Nature">
        <title>Genome sequence of Yersinia pestis, the causative agent of plague.</title>
        <authorList>
            <person name="Parkhill J."/>
            <person name="Wren B.W."/>
            <person name="Thomson N.R."/>
            <person name="Titball R.W."/>
            <person name="Holden M.T.G."/>
            <person name="Prentice M.B."/>
            <person name="Sebaihia M."/>
            <person name="James K.D."/>
            <person name="Churcher C.M."/>
            <person name="Mungall K.L."/>
            <person name="Baker S."/>
            <person name="Basham D."/>
            <person name="Bentley S.D."/>
            <person name="Brooks K."/>
            <person name="Cerdeno-Tarraga A.-M."/>
            <person name="Chillingworth T."/>
            <person name="Cronin A."/>
            <person name="Davies R.M."/>
            <person name="Davis P."/>
            <person name="Dougan G."/>
            <person name="Feltwell T."/>
            <person name="Hamlin N."/>
            <person name="Holroyd S."/>
            <person name="Jagels K."/>
            <person name="Karlyshev A.V."/>
            <person name="Leather S."/>
            <person name="Moule S."/>
            <person name="Oyston P.C.F."/>
            <person name="Quail M.A."/>
            <person name="Rutherford K.M."/>
            <person name="Simmonds M."/>
            <person name="Skelton J."/>
            <person name="Stevens K."/>
            <person name="Whitehead S."/>
            <person name="Barrell B.G."/>
        </authorList>
    </citation>
    <scope>NUCLEOTIDE SEQUENCE [LARGE SCALE GENOMIC DNA]</scope>
    <source>
        <strain>CO-92 / Biovar Orientalis</strain>
    </source>
</reference>
<reference key="2">
    <citation type="journal article" date="2002" name="J. Bacteriol.">
        <title>Genome sequence of Yersinia pestis KIM.</title>
        <authorList>
            <person name="Deng W."/>
            <person name="Burland V."/>
            <person name="Plunkett G. III"/>
            <person name="Boutin A."/>
            <person name="Mayhew G.F."/>
            <person name="Liss P."/>
            <person name="Perna N.T."/>
            <person name="Rose D.J."/>
            <person name="Mau B."/>
            <person name="Zhou S."/>
            <person name="Schwartz D.C."/>
            <person name="Fetherston J.D."/>
            <person name="Lindler L.E."/>
            <person name="Brubaker R.R."/>
            <person name="Plano G.V."/>
            <person name="Straley S.C."/>
            <person name="McDonough K.A."/>
            <person name="Nilles M.L."/>
            <person name="Matson J.S."/>
            <person name="Blattner F.R."/>
            <person name="Perry R.D."/>
        </authorList>
    </citation>
    <scope>NUCLEOTIDE SEQUENCE [LARGE SCALE GENOMIC DNA]</scope>
    <source>
        <strain>KIM10+ / Biovar Mediaevalis</strain>
    </source>
</reference>
<reference key="3">
    <citation type="journal article" date="2004" name="DNA Res.">
        <title>Complete genome sequence of Yersinia pestis strain 91001, an isolate avirulent to humans.</title>
        <authorList>
            <person name="Song Y."/>
            <person name="Tong Z."/>
            <person name="Wang J."/>
            <person name="Wang L."/>
            <person name="Guo Z."/>
            <person name="Han Y."/>
            <person name="Zhang J."/>
            <person name="Pei D."/>
            <person name="Zhou D."/>
            <person name="Qin H."/>
            <person name="Pang X."/>
            <person name="Han Y."/>
            <person name="Zhai J."/>
            <person name="Li M."/>
            <person name="Cui B."/>
            <person name="Qi Z."/>
            <person name="Jin L."/>
            <person name="Dai R."/>
            <person name="Chen F."/>
            <person name="Li S."/>
            <person name="Ye C."/>
            <person name="Du Z."/>
            <person name="Lin W."/>
            <person name="Wang J."/>
            <person name="Yu J."/>
            <person name="Yang H."/>
            <person name="Wang J."/>
            <person name="Huang P."/>
            <person name="Yang R."/>
        </authorList>
    </citation>
    <scope>NUCLEOTIDE SEQUENCE [LARGE SCALE GENOMIC DNA]</scope>
    <source>
        <strain>91001 / Biovar Mediaevalis</strain>
    </source>
</reference>
<proteinExistence type="inferred from homology"/>
<accession>Q8ZBE1</accession>
<accession>Q0WBH4</accession>
<keyword id="KW-1185">Reference proteome</keyword>
<protein>
    <recommendedName>
        <fullName evidence="1">UPF0213 protein YPO3475/y0709/YP_0608</fullName>
    </recommendedName>
</protein>